<reference key="1">
    <citation type="journal article" date="2007" name="J. Bacteriol.">
        <title>The genome sequence of avian pathogenic Escherichia coli strain O1:K1:H7 shares strong similarities with human extraintestinal pathogenic E. coli genomes.</title>
        <authorList>
            <person name="Johnson T.J."/>
            <person name="Kariyawasam S."/>
            <person name="Wannemuehler Y."/>
            <person name="Mangiamele P."/>
            <person name="Johnson S.J."/>
            <person name="Doetkott C."/>
            <person name="Skyberg J.A."/>
            <person name="Lynne A.M."/>
            <person name="Johnson J.R."/>
            <person name="Nolan L.K."/>
        </authorList>
    </citation>
    <scope>NUCLEOTIDE SEQUENCE [LARGE SCALE GENOMIC DNA]</scope>
</reference>
<comment type="function">
    <text evidence="1">ATP-dependent specificity component of the Clp protease. It directs the protease to specific substrates. Can perform chaperone functions in the absence of ClpP.</text>
</comment>
<comment type="subunit">
    <text evidence="1">Component of the ClpX-ClpP complex. Forms a hexameric ring that, in the presence of ATP, binds to fourteen ClpP subunits assembled into a disk-like structure with a central cavity, resembling the structure of eukaryotic proteasomes.</text>
</comment>
<comment type="similarity">
    <text evidence="1">Belongs to the ClpX chaperone family.</text>
</comment>
<organism>
    <name type="scientific">Escherichia coli O1:K1 / APEC</name>
    <dbReference type="NCBI Taxonomy" id="405955"/>
    <lineage>
        <taxon>Bacteria</taxon>
        <taxon>Pseudomonadati</taxon>
        <taxon>Pseudomonadota</taxon>
        <taxon>Gammaproteobacteria</taxon>
        <taxon>Enterobacterales</taxon>
        <taxon>Enterobacteriaceae</taxon>
        <taxon>Escherichia</taxon>
    </lineage>
</organism>
<protein>
    <recommendedName>
        <fullName evidence="1">ATP-dependent Clp protease ATP-binding subunit ClpX</fullName>
    </recommendedName>
</protein>
<sequence>MTDKRKDGSGKLLYCSFCGKSQHEVRKLIAGPSVYICDECVDLCNDIIREEIKEVAPHRERSALPTPHEIRNHLDDYVIGQEQAKKVLAVAVYNHYKRLRNGDTSNGVELGKSNILLIGPTGSGKTLLAETLARLLDVPFTMADATTLTEAGYVGEDVENIIQKLLQKCDYDVQKAQRGIVYIDEIDKISRKSDNPSITRDVSGEGVQQALLKLIEGTVAAVPPQGGRKHPQQEFLQVDTSKILFICGGAFAGLDKVISHRVETGSGIGFGATVKAKSDKASEGELLAQVEPEDLIKFGLIPEFIGRLPVVATLNELSEEALIQILKEPKNALTKQYQALFNLEGVDLEFRDEALDAIAKKAMARKTGARGLRSIVEAALLDTMYDLPSMEDVEKVVIDESVIDGQSKPLLIYGKPEAQQASGE</sequence>
<gene>
    <name evidence="1" type="primary">clpX</name>
    <name type="ordered locus">Ecok1_04030</name>
    <name type="ORF">APECO1_1573</name>
</gene>
<feature type="chain" id="PRO_1000024550" description="ATP-dependent Clp protease ATP-binding subunit ClpX">
    <location>
        <begin position="1"/>
        <end position="424"/>
    </location>
</feature>
<feature type="domain" description="ClpX-type ZB" evidence="2">
    <location>
        <begin position="2"/>
        <end position="56"/>
    </location>
</feature>
<feature type="binding site" evidence="2">
    <location>
        <position position="15"/>
    </location>
    <ligand>
        <name>Zn(2+)</name>
        <dbReference type="ChEBI" id="CHEBI:29105"/>
    </ligand>
</feature>
<feature type="binding site" evidence="2">
    <location>
        <position position="18"/>
    </location>
    <ligand>
        <name>Zn(2+)</name>
        <dbReference type="ChEBI" id="CHEBI:29105"/>
    </ligand>
</feature>
<feature type="binding site" evidence="2">
    <location>
        <position position="37"/>
    </location>
    <ligand>
        <name>Zn(2+)</name>
        <dbReference type="ChEBI" id="CHEBI:29105"/>
    </ligand>
</feature>
<feature type="binding site" evidence="2">
    <location>
        <position position="40"/>
    </location>
    <ligand>
        <name>Zn(2+)</name>
        <dbReference type="ChEBI" id="CHEBI:29105"/>
    </ligand>
</feature>
<feature type="binding site" evidence="1">
    <location>
        <begin position="120"/>
        <end position="127"/>
    </location>
    <ligand>
        <name>ATP</name>
        <dbReference type="ChEBI" id="CHEBI:30616"/>
    </ligand>
</feature>
<keyword id="KW-0067">ATP-binding</keyword>
<keyword id="KW-0143">Chaperone</keyword>
<keyword id="KW-0479">Metal-binding</keyword>
<keyword id="KW-0547">Nucleotide-binding</keyword>
<keyword id="KW-1185">Reference proteome</keyword>
<keyword id="KW-0862">Zinc</keyword>
<evidence type="ECO:0000255" key="1">
    <source>
        <dbReference type="HAMAP-Rule" id="MF_00175"/>
    </source>
</evidence>
<evidence type="ECO:0000255" key="2">
    <source>
        <dbReference type="PROSITE-ProRule" id="PRU01250"/>
    </source>
</evidence>
<proteinExistence type="inferred from homology"/>
<accession>A1A8A7</accession>
<dbReference type="EMBL" id="CP000468">
    <property type="protein sequence ID" value="ABI99896.1"/>
    <property type="molecule type" value="Genomic_DNA"/>
</dbReference>
<dbReference type="RefSeq" id="WP_000130305.1">
    <property type="nucleotide sequence ID" value="NZ_CADILS010000009.1"/>
</dbReference>
<dbReference type="BMRB" id="A1A8A7"/>
<dbReference type="SMR" id="A1A8A7"/>
<dbReference type="GeneID" id="93777016"/>
<dbReference type="KEGG" id="ecv:APECO1_1573"/>
<dbReference type="HOGENOM" id="CLU_014218_8_2_6"/>
<dbReference type="Proteomes" id="UP000008216">
    <property type="component" value="Chromosome"/>
</dbReference>
<dbReference type="GO" id="GO:0009376">
    <property type="term" value="C:HslUV protease complex"/>
    <property type="evidence" value="ECO:0007669"/>
    <property type="project" value="TreeGrafter"/>
</dbReference>
<dbReference type="GO" id="GO:0005524">
    <property type="term" value="F:ATP binding"/>
    <property type="evidence" value="ECO:0007669"/>
    <property type="project" value="UniProtKB-UniRule"/>
</dbReference>
<dbReference type="GO" id="GO:0016887">
    <property type="term" value="F:ATP hydrolysis activity"/>
    <property type="evidence" value="ECO:0007669"/>
    <property type="project" value="InterPro"/>
</dbReference>
<dbReference type="GO" id="GO:0140662">
    <property type="term" value="F:ATP-dependent protein folding chaperone"/>
    <property type="evidence" value="ECO:0007669"/>
    <property type="project" value="InterPro"/>
</dbReference>
<dbReference type="GO" id="GO:0046983">
    <property type="term" value="F:protein dimerization activity"/>
    <property type="evidence" value="ECO:0007669"/>
    <property type="project" value="InterPro"/>
</dbReference>
<dbReference type="GO" id="GO:0051082">
    <property type="term" value="F:unfolded protein binding"/>
    <property type="evidence" value="ECO:0007669"/>
    <property type="project" value="UniProtKB-UniRule"/>
</dbReference>
<dbReference type="GO" id="GO:0008270">
    <property type="term" value="F:zinc ion binding"/>
    <property type="evidence" value="ECO:0007669"/>
    <property type="project" value="InterPro"/>
</dbReference>
<dbReference type="GO" id="GO:0051301">
    <property type="term" value="P:cell division"/>
    <property type="evidence" value="ECO:0007669"/>
    <property type="project" value="TreeGrafter"/>
</dbReference>
<dbReference type="GO" id="GO:0051603">
    <property type="term" value="P:proteolysis involved in protein catabolic process"/>
    <property type="evidence" value="ECO:0007669"/>
    <property type="project" value="TreeGrafter"/>
</dbReference>
<dbReference type="CDD" id="cd19497">
    <property type="entry name" value="RecA-like_ClpX"/>
    <property type="match status" value="1"/>
</dbReference>
<dbReference type="FunFam" id="1.10.8.60:FF:000002">
    <property type="entry name" value="ATP-dependent Clp protease ATP-binding subunit ClpX"/>
    <property type="match status" value="1"/>
</dbReference>
<dbReference type="FunFam" id="3.40.50.300:FF:000005">
    <property type="entry name" value="ATP-dependent Clp protease ATP-binding subunit ClpX"/>
    <property type="match status" value="1"/>
</dbReference>
<dbReference type="Gene3D" id="1.10.8.60">
    <property type="match status" value="1"/>
</dbReference>
<dbReference type="Gene3D" id="6.20.220.10">
    <property type="entry name" value="ClpX chaperone, C4-type zinc finger domain"/>
    <property type="match status" value="1"/>
</dbReference>
<dbReference type="Gene3D" id="3.40.50.300">
    <property type="entry name" value="P-loop containing nucleotide triphosphate hydrolases"/>
    <property type="match status" value="1"/>
</dbReference>
<dbReference type="HAMAP" id="MF_00175">
    <property type="entry name" value="ClpX"/>
    <property type="match status" value="1"/>
</dbReference>
<dbReference type="InterPro" id="IPR003593">
    <property type="entry name" value="AAA+_ATPase"/>
</dbReference>
<dbReference type="InterPro" id="IPR050052">
    <property type="entry name" value="ATP-dep_Clp_protease_ClpX"/>
</dbReference>
<dbReference type="InterPro" id="IPR003959">
    <property type="entry name" value="ATPase_AAA_core"/>
</dbReference>
<dbReference type="InterPro" id="IPR019489">
    <property type="entry name" value="Clp_ATPase_C"/>
</dbReference>
<dbReference type="InterPro" id="IPR004487">
    <property type="entry name" value="Clp_protease_ATP-bd_su_ClpX"/>
</dbReference>
<dbReference type="InterPro" id="IPR046425">
    <property type="entry name" value="ClpX_bact"/>
</dbReference>
<dbReference type="InterPro" id="IPR027417">
    <property type="entry name" value="P-loop_NTPase"/>
</dbReference>
<dbReference type="InterPro" id="IPR010603">
    <property type="entry name" value="Znf_CppX_C4"/>
</dbReference>
<dbReference type="InterPro" id="IPR038366">
    <property type="entry name" value="Znf_CppX_C4_sf"/>
</dbReference>
<dbReference type="NCBIfam" id="TIGR00382">
    <property type="entry name" value="clpX"/>
    <property type="match status" value="1"/>
</dbReference>
<dbReference type="NCBIfam" id="NF003745">
    <property type="entry name" value="PRK05342.1"/>
    <property type="match status" value="1"/>
</dbReference>
<dbReference type="PANTHER" id="PTHR48102:SF7">
    <property type="entry name" value="ATP-DEPENDENT CLP PROTEASE ATP-BINDING SUBUNIT CLPX-LIKE, MITOCHONDRIAL"/>
    <property type="match status" value="1"/>
</dbReference>
<dbReference type="PANTHER" id="PTHR48102">
    <property type="entry name" value="ATP-DEPENDENT CLP PROTEASE ATP-BINDING SUBUNIT CLPX-LIKE, MITOCHONDRIAL-RELATED"/>
    <property type="match status" value="1"/>
</dbReference>
<dbReference type="Pfam" id="PF07724">
    <property type="entry name" value="AAA_2"/>
    <property type="match status" value="1"/>
</dbReference>
<dbReference type="Pfam" id="PF10431">
    <property type="entry name" value="ClpB_D2-small"/>
    <property type="match status" value="1"/>
</dbReference>
<dbReference type="Pfam" id="PF06689">
    <property type="entry name" value="zf-C4_ClpX"/>
    <property type="match status" value="1"/>
</dbReference>
<dbReference type="SMART" id="SM00382">
    <property type="entry name" value="AAA"/>
    <property type="match status" value="1"/>
</dbReference>
<dbReference type="SMART" id="SM01086">
    <property type="entry name" value="ClpB_D2-small"/>
    <property type="match status" value="1"/>
</dbReference>
<dbReference type="SMART" id="SM00994">
    <property type="entry name" value="zf-C4_ClpX"/>
    <property type="match status" value="1"/>
</dbReference>
<dbReference type="SUPFAM" id="SSF57716">
    <property type="entry name" value="Glucocorticoid receptor-like (DNA-binding domain)"/>
    <property type="match status" value="1"/>
</dbReference>
<dbReference type="SUPFAM" id="SSF52540">
    <property type="entry name" value="P-loop containing nucleoside triphosphate hydrolases"/>
    <property type="match status" value="1"/>
</dbReference>
<dbReference type="PROSITE" id="PS51902">
    <property type="entry name" value="CLPX_ZB"/>
    <property type="match status" value="1"/>
</dbReference>
<name>CLPX_ECOK1</name>